<accession>B2FK23</accession>
<name>KDSB_STRMK</name>
<reference key="1">
    <citation type="journal article" date="2008" name="Genome Biol.">
        <title>The complete genome, comparative and functional analysis of Stenotrophomonas maltophilia reveals an organism heavily shielded by drug resistance determinants.</title>
        <authorList>
            <person name="Crossman L.C."/>
            <person name="Gould V.C."/>
            <person name="Dow J.M."/>
            <person name="Vernikos G.S."/>
            <person name="Okazaki A."/>
            <person name="Sebaihia M."/>
            <person name="Saunders D."/>
            <person name="Arrowsmith C."/>
            <person name="Carver T."/>
            <person name="Peters N."/>
            <person name="Adlem E."/>
            <person name="Kerhornou A."/>
            <person name="Lord A."/>
            <person name="Murphy L."/>
            <person name="Seeger K."/>
            <person name="Squares R."/>
            <person name="Rutter S."/>
            <person name="Quail M.A."/>
            <person name="Rajandream M.A."/>
            <person name="Harris D."/>
            <person name="Churcher C."/>
            <person name="Bentley S.D."/>
            <person name="Parkhill J."/>
            <person name="Thomson N.R."/>
            <person name="Avison M.B."/>
        </authorList>
    </citation>
    <scope>NUCLEOTIDE SEQUENCE [LARGE SCALE GENOMIC DNA]</scope>
    <source>
        <strain>K279a</strain>
    </source>
</reference>
<dbReference type="EC" id="2.7.7.38" evidence="1"/>
<dbReference type="EMBL" id="AM743169">
    <property type="protein sequence ID" value="CAQ45173.1"/>
    <property type="molecule type" value="Genomic_DNA"/>
</dbReference>
<dbReference type="RefSeq" id="WP_012479685.1">
    <property type="nucleotide sequence ID" value="NC_010943.1"/>
</dbReference>
<dbReference type="SMR" id="B2FK23"/>
<dbReference type="EnsemblBacteria" id="CAQ45173">
    <property type="protein sequence ID" value="CAQ45173"/>
    <property type="gene ID" value="Smlt1642"/>
</dbReference>
<dbReference type="KEGG" id="sml:Smlt1642"/>
<dbReference type="PATRIC" id="fig|522373.3.peg.1576"/>
<dbReference type="eggNOG" id="COG1212">
    <property type="taxonomic scope" value="Bacteria"/>
</dbReference>
<dbReference type="HOGENOM" id="CLU_065038_1_0_6"/>
<dbReference type="UniPathway" id="UPA00030"/>
<dbReference type="UniPathway" id="UPA00358">
    <property type="reaction ID" value="UER00476"/>
</dbReference>
<dbReference type="Proteomes" id="UP000008840">
    <property type="component" value="Chromosome"/>
</dbReference>
<dbReference type="GO" id="GO:0005829">
    <property type="term" value="C:cytosol"/>
    <property type="evidence" value="ECO:0007669"/>
    <property type="project" value="TreeGrafter"/>
</dbReference>
<dbReference type="GO" id="GO:0008690">
    <property type="term" value="F:3-deoxy-manno-octulosonate cytidylyltransferase activity"/>
    <property type="evidence" value="ECO:0007669"/>
    <property type="project" value="UniProtKB-UniRule"/>
</dbReference>
<dbReference type="GO" id="GO:0033468">
    <property type="term" value="P:CMP-keto-3-deoxy-D-manno-octulosonic acid biosynthetic process"/>
    <property type="evidence" value="ECO:0007669"/>
    <property type="project" value="UniProtKB-UniRule"/>
</dbReference>
<dbReference type="GO" id="GO:0009103">
    <property type="term" value="P:lipopolysaccharide biosynthetic process"/>
    <property type="evidence" value="ECO:0007669"/>
    <property type="project" value="UniProtKB-UniRule"/>
</dbReference>
<dbReference type="CDD" id="cd02517">
    <property type="entry name" value="CMP-KDO-Synthetase"/>
    <property type="match status" value="1"/>
</dbReference>
<dbReference type="FunFam" id="3.90.550.10:FF:000011">
    <property type="entry name" value="3-deoxy-manno-octulosonate cytidylyltransferase"/>
    <property type="match status" value="1"/>
</dbReference>
<dbReference type="Gene3D" id="3.90.550.10">
    <property type="entry name" value="Spore Coat Polysaccharide Biosynthesis Protein SpsA, Chain A"/>
    <property type="match status" value="1"/>
</dbReference>
<dbReference type="HAMAP" id="MF_00057">
    <property type="entry name" value="KdsB"/>
    <property type="match status" value="1"/>
</dbReference>
<dbReference type="InterPro" id="IPR003329">
    <property type="entry name" value="Cytidylyl_trans"/>
</dbReference>
<dbReference type="InterPro" id="IPR004528">
    <property type="entry name" value="KdsB"/>
</dbReference>
<dbReference type="InterPro" id="IPR029044">
    <property type="entry name" value="Nucleotide-diphossugar_trans"/>
</dbReference>
<dbReference type="NCBIfam" id="TIGR00466">
    <property type="entry name" value="kdsB"/>
    <property type="match status" value="1"/>
</dbReference>
<dbReference type="NCBIfam" id="NF003952">
    <property type="entry name" value="PRK05450.1-5"/>
    <property type="match status" value="1"/>
</dbReference>
<dbReference type="PANTHER" id="PTHR42866">
    <property type="entry name" value="3-DEOXY-MANNO-OCTULOSONATE CYTIDYLYLTRANSFERASE"/>
    <property type="match status" value="1"/>
</dbReference>
<dbReference type="PANTHER" id="PTHR42866:SF2">
    <property type="entry name" value="3-DEOXY-MANNO-OCTULOSONATE CYTIDYLYLTRANSFERASE, MITOCHONDRIAL"/>
    <property type="match status" value="1"/>
</dbReference>
<dbReference type="Pfam" id="PF02348">
    <property type="entry name" value="CTP_transf_3"/>
    <property type="match status" value="1"/>
</dbReference>
<dbReference type="SUPFAM" id="SSF53448">
    <property type="entry name" value="Nucleotide-diphospho-sugar transferases"/>
    <property type="match status" value="1"/>
</dbReference>
<protein>
    <recommendedName>
        <fullName evidence="1">3-deoxy-manno-octulosonate cytidylyltransferase</fullName>
        <ecNumber evidence="1">2.7.7.38</ecNumber>
    </recommendedName>
    <alternativeName>
        <fullName evidence="1">CMP-2-keto-3-deoxyoctulosonic acid synthase</fullName>
        <shortName evidence="1">CKS</shortName>
        <shortName evidence="1">CMP-KDO synthase</shortName>
    </alternativeName>
</protein>
<feature type="chain" id="PRO_0000370164" description="3-deoxy-manno-octulosonate cytidylyltransferase">
    <location>
        <begin position="1"/>
        <end position="257"/>
    </location>
</feature>
<organism>
    <name type="scientific">Stenotrophomonas maltophilia (strain K279a)</name>
    <dbReference type="NCBI Taxonomy" id="522373"/>
    <lineage>
        <taxon>Bacteria</taxon>
        <taxon>Pseudomonadati</taxon>
        <taxon>Pseudomonadota</taxon>
        <taxon>Gammaproteobacteria</taxon>
        <taxon>Lysobacterales</taxon>
        <taxon>Lysobacteraceae</taxon>
        <taxon>Stenotrophomonas</taxon>
        <taxon>Stenotrophomonas maltophilia group</taxon>
    </lineage>
</organism>
<sequence>MTEFVVAIPARYAASRLPGKPLRLLGGEPLVLHVARRALQAGAGEVWVATDDQRIADALSGLAEVKVAMTATSHASGTDRLAECARIAGWADDTVVVNLQGDEPFAPAAGIRAVAQALVEGNAPMSTLATAVEDAETLFDPNVVKLVRNVRNEAMYFSRAPIAWHRDGFARSREVLPEGHAWLRHIGIYGYRAGFLQQFAAMPPGRLEQVESLEQLRVLEAGYPISVAISPEPFPAGIDTPEDLERAEALLQTLAAR</sequence>
<gene>
    <name evidence="1" type="primary">kdsB</name>
    <name type="ordered locus">Smlt1642</name>
</gene>
<evidence type="ECO:0000255" key="1">
    <source>
        <dbReference type="HAMAP-Rule" id="MF_00057"/>
    </source>
</evidence>
<comment type="function">
    <text evidence="1">Activates KDO (a required 8-carbon sugar) for incorporation into bacterial lipopolysaccharide in Gram-negative bacteria.</text>
</comment>
<comment type="catalytic activity">
    <reaction evidence="1">
        <text>3-deoxy-alpha-D-manno-oct-2-ulosonate + CTP = CMP-3-deoxy-beta-D-manno-octulosonate + diphosphate</text>
        <dbReference type="Rhea" id="RHEA:23448"/>
        <dbReference type="ChEBI" id="CHEBI:33019"/>
        <dbReference type="ChEBI" id="CHEBI:37563"/>
        <dbReference type="ChEBI" id="CHEBI:85986"/>
        <dbReference type="ChEBI" id="CHEBI:85987"/>
        <dbReference type="EC" id="2.7.7.38"/>
    </reaction>
</comment>
<comment type="pathway">
    <text evidence="1">Nucleotide-sugar biosynthesis; CMP-3-deoxy-D-manno-octulosonate biosynthesis; CMP-3-deoxy-D-manno-octulosonate from 3-deoxy-D-manno-octulosonate and CTP: step 1/1.</text>
</comment>
<comment type="pathway">
    <text evidence="1">Bacterial outer membrane biogenesis; lipopolysaccharide biosynthesis.</text>
</comment>
<comment type="subcellular location">
    <subcellularLocation>
        <location evidence="1">Cytoplasm</location>
    </subcellularLocation>
</comment>
<comment type="similarity">
    <text evidence="1">Belongs to the KdsB family.</text>
</comment>
<proteinExistence type="inferred from homology"/>
<keyword id="KW-0963">Cytoplasm</keyword>
<keyword id="KW-0448">Lipopolysaccharide biosynthesis</keyword>
<keyword id="KW-0548">Nucleotidyltransferase</keyword>
<keyword id="KW-1185">Reference proteome</keyword>
<keyword id="KW-0808">Transferase</keyword>